<feature type="chain" id="PRO_0000265022" description="Putative 3-methyladenine DNA glycosylase">
    <location>
        <begin position="1"/>
        <end position="193"/>
    </location>
</feature>
<proteinExistence type="inferred from homology"/>
<reference key="1">
    <citation type="journal article" date="2005" name="Nat. Genet.">
        <title>The complete genome sequence of Francisella tularensis, the causative agent of tularemia.</title>
        <authorList>
            <person name="Larsson P."/>
            <person name="Oyston P.C.F."/>
            <person name="Chain P."/>
            <person name="Chu M.C."/>
            <person name="Duffield M."/>
            <person name="Fuxelius H.-H."/>
            <person name="Garcia E."/>
            <person name="Haelltorp G."/>
            <person name="Johansson D."/>
            <person name="Isherwood K.E."/>
            <person name="Karp P.D."/>
            <person name="Larsson E."/>
            <person name="Liu Y."/>
            <person name="Michell S."/>
            <person name="Prior J."/>
            <person name="Prior R."/>
            <person name="Malfatti S."/>
            <person name="Sjoestedt A."/>
            <person name="Svensson K."/>
            <person name="Thompson N."/>
            <person name="Vergez L."/>
            <person name="Wagg J.K."/>
            <person name="Wren B.W."/>
            <person name="Lindler L.E."/>
            <person name="Andersson S.G.E."/>
            <person name="Forsman M."/>
            <person name="Titball R.W."/>
        </authorList>
    </citation>
    <scope>NUCLEOTIDE SEQUENCE [LARGE SCALE GENOMIC DNA]</scope>
    <source>
        <strain>SCHU S4 / Schu 4</strain>
    </source>
</reference>
<accession>Q5NH09</accession>
<name>3MGH_FRATT</name>
<sequence length="193" mass="21912">MNNLEAILRLKTIDAAKKLLGHFLVSKYNNKILIGKIVETEAYLYNDPACHSYSNRTKRNSMMYAQAGTSYVYFTYGMHYCFNVVTADVGIGEAILIRALEPIAGIEQMQLNRSKTKLMDLCSGPAKLTQALNINLKDNGINLLDKDSSILLRYNNDLINEIDIVQTQRIGISKAKDMPYRFYIKDNIFVSKK</sequence>
<comment type="similarity">
    <text evidence="1">Belongs to the DNA glycosylase MPG family.</text>
</comment>
<evidence type="ECO:0000255" key="1">
    <source>
        <dbReference type="HAMAP-Rule" id="MF_00527"/>
    </source>
</evidence>
<keyword id="KW-0227">DNA damage</keyword>
<keyword id="KW-0234">DNA repair</keyword>
<keyword id="KW-0378">Hydrolase</keyword>
<keyword id="KW-1185">Reference proteome</keyword>
<organism>
    <name type="scientific">Francisella tularensis subsp. tularensis (strain SCHU S4 / Schu 4)</name>
    <dbReference type="NCBI Taxonomy" id="177416"/>
    <lineage>
        <taxon>Bacteria</taxon>
        <taxon>Pseudomonadati</taxon>
        <taxon>Pseudomonadota</taxon>
        <taxon>Gammaproteobacteria</taxon>
        <taxon>Thiotrichales</taxon>
        <taxon>Francisellaceae</taxon>
        <taxon>Francisella</taxon>
    </lineage>
</organism>
<protein>
    <recommendedName>
        <fullName evidence="1">Putative 3-methyladenine DNA glycosylase</fullName>
        <ecNumber evidence="1">3.2.2.-</ecNumber>
    </recommendedName>
</protein>
<gene>
    <name type="ordered locus">FTT_0666c</name>
</gene>
<dbReference type="EC" id="3.2.2.-" evidence="1"/>
<dbReference type="EMBL" id="AJ749949">
    <property type="protein sequence ID" value="CAG45299.1"/>
    <property type="molecule type" value="Genomic_DNA"/>
</dbReference>
<dbReference type="RefSeq" id="WP_003020434.1">
    <property type="nucleotide sequence ID" value="NC_006570.2"/>
</dbReference>
<dbReference type="RefSeq" id="YP_169683.1">
    <property type="nucleotide sequence ID" value="NC_006570.2"/>
</dbReference>
<dbReference type="SMR" id="Q5NH09"/>
<dbReference type="STRING" id="177416.FTT_0666c"/>
<dbReference type="DNASU" id="3191052"/>
<dbReference type="EnsemblBacteria" id="CAG45299">
    <property type="protein sequence ID" value="CAG45299"/>
    <property type="gene ID" value="FTT_0666c"/>
</dbReference>
<dbReference type="KEGG" id="ftu:FTT_0666c"/>
<dbReference type="eggNOG" id="COG2094">
    <property type="taxonomic scope" value="Bacteria"/>
</dbReference>
<dbReference type="OrthoDB" id="9794313at2"/>
<dbReference type="Proteomes" id="UP000001174">
    <property type="component" value="Chromosome"/>
</dbReference>
<dbReference type="GO" id="GO:0003905">
    <property type="term" value="F:alkylbase DNA N-glycosylase activity"/>
    <property type="evidence" value="ECO:0007669"/>
    <property type="project" value="InterPro"/>
</dbReference>
<dbReference type="GO" id="GO:0003677">
    <property type="term" value="F:DNA binding"/>
    <property type="evidence" value="ECO:0007669"/>
    <property type="project" value="InterPro"/>
</dbReference>
<dbReference type="GO" id="GO:0006284">
    <property type="term" value="P:base-excision repair"/>
    <property type="evidence" value="ECO:0007669"/>
    <property type="project" value="InterPro"/>
</dbReference>
<dbReference type="CDD" id="cd00540">
    <property type="entry name" value="AAG"/>
    <property type="match status" value="1"/>
</dbReference>
<dbReference type="FunFam" id="3.10.300.10:FF:000001">
    <property type="entry name" value="Putative 3-methyladenine DNA glycosylase"/>
    <property type="match status" value="1"/>
</dbReference>
<dbReference type="Gene3D" id="3.10.300.10">
    <property type="entry name" value="Methylpurine-DNA glycosylase (MPG)"/>
    <property type="match status" value="1"/>
</dbReference>
<dbReference type="HAMAP" id="MF_00527">
    <property type="entry name" value="3MGH"/>
    <property type="match status" value="1"/>
</dbReference>
<dbReference type="InterPro" id="IPR011034">
    <property type="entry name" value="Formyl_transferase-like_C_sf"/>
</dbReference>
<dbReference type="InterPro" id="IPR003180">
    <property type="entry name" value="MPG"/>
</dbReference>
<dbReference type="InterPro" id="IPR036995">
    <property type="entry name" value="MPG_sf"/>
</dbReference>
<dbReference type="NCBIfam" id="TIGR00567">
    <property type="entry name" value="3mg"/>
    <property type="match status" value="1"/>
</dbReference>
<dbReference type="NCBIfam" id="NF002003">
    <property type="entry name" value="PRK00802.1-3"/>
    <property type="match status" value="1"/>
</dbReference>
<dbReference type="PANTHER" id="PTHR10429">
    <property type="entry name" value="DNA-3-METHYLADENINE GLYCOSYLASE"/>
    <property type="match status" value="1"/>
</dbReference>
<dbReference type="PANTHER" id="PTHR10429:SF0">
    <property type="entry name" value="DNA-3-METHYLADENINE GLYCOSYLASE"/>
    <property type="match status" value="1"/>
</dbReference>
<dbReference type="Pfam" id="PF02245">
    <property type="entry name" value="Pur_DNA_glyco"/>
    <property type="match status" value="1"/>
</dbReference>
<dbReference type="SUPFAM" id="SSF50486">
    <property type="entry name" value="FMT C-terminal domain-like"/>
    <property type="match status" value="1"/>
</dbReference>